<organism>
    <name type="scientific">Saccharomyces cerevisiae (strain ATCC 204508 / S288c)</name>
    <name type="common">Baker's yeast</name>
    <dbReference type="NCBI Taxonomy" id="559292"/>
    <lineage>
        <taxon>Eukaryota</taxon>
        <taxon>Fungi</taxon>
        <taxon>Dikarya</taxon>
        <taxon>Ascomycota</taxon>
        <taxon>Saccharomycotina</taxon>
        <taxon>Saccharomycetes</taxon>
        <taxon>Saccharomycetales</taxon>
        <taxon>Saccharomycetaceae</taxon>
        <taxon>Saccharomyces</taxon>
    </lineage>
</organism>
<keyword id="KW-1185">Reference proteome</keyword>
<comment type="function">
    <text>May be involved in phosphate metabolism.</text>
</comment>
<comment type="induction">
    <text evidence="1">By low phosphate level.</text>
</comment>
<comment type="miscellaneous">
    <text evidence="2">Present with 195 molecules/cell in log phase SD medium.</text>
</comment>
<comment type="similarity">
    <text evidence="3">Belongs to the SSM1 family.</text>
</comment>
<proteinExistence type="evidence at protein level"/>
<name>PHM8_YEAST</name>
<feature type="chain" id="PRO_0000202627" description="Phosphate metabolism protein 8">
    <location>
        <begin position="1"/>
        <end position="321"/>
    </location>
</feature>
<protein>
    <recommendedName>
        <fullName>Phosphate metabolism protein 8</fullName>
    </recommendedName>
</protein>
<sequence length="321" mass="37719">MTIAKDYRTIYRNQIKKQIRLNQEHLQSLTHLGSQINFEVDPPKLPDPDPARKVFFFDIDNTLYRKSTKVQLLMQQSLSNFFKYELGFDDDEAERLIESYYQEYGLSVKGLIKNKQIDDVLQYNTFIDDSLPLQDYLKPDWKLRELLINLKKKKLGKFDKLWLFTNSYKNHAIRCVKILGIADLFDGITYCHYDRPIEEEFICKPDPKFFETAKLQSGLSSFANAWFIDDNESNVRSALSMGMGHVIHLIEDYQYESENIVTKDHKNKQQFSILKDILEIPLIMDVEVYRPSSIAIKEMEELEEEGEAVNWSNQQINVQSS</sequence>
<evidence type="ECO:0000269" key="1">
    <source>
    </source>
</evidence>
<evidence type="ECO:0000269" key="2">
    <source>
    </source>
</evidence>
<evidence type="ECO:0000305" key="3"/>
<accession>P40025</accession>
<accession>D3DLT6</accession>
<dbReference type="EMBL" id="U18796">
    <property type="protein sequence ID" value="AAB64572.1"/>
    <property type="molecule type" value="Genomic_DNA"/>
</dbReference>
<dbReference type="EMBL" id="BK006939">
    <property type="protein sequence ID" value="DAA07690.1"/>
    <property type="molecule type" value="Genomic_DNA"/>
</dbReference>
<dbReference type="PIR" id="S50540">
    <property type="entry name" value="S50540"/>
</dbReference>
<dbReference type="RefSeq" id="NP_010954.1">
    <property type="nucleotide sequence ID" value="NM_001178928.1"/>
</dbReference>
<dbReference type="SMR" id="P40025"/>
<dbReference type="BioGRID" id="36772">
    <property type="interactions" value="67"/>
</dbReference>
<dbReference type="DIP" id="DIP-5338N"/>
<dbReference type="FunCoup" id="P40025">
    <property type="interactions" value="729"/>
</dbReference>
<dbReference type="IntAct" id="P40025">
    <property type="interactions" value="12"/>
</dbReference>
<dbReference type="STRING" id="4932.YER037W"/>
<dbReference type="iPTMnet" id="P40025"/>
<dbReference type="PaxDb" id="4932-YER037W"/>
<dbReference type="PeptideAtlas" id="P40025"/>
<dbReference type="EnsemblFungi" id="YER037W_mRNA">
    <property type="protein sequence ID" value="YER037W"/>
    <property type="gene ID" value="YER037W"/>
</dbReference>
<dbReference type="GeneID" id="856759"/>
<dbReference type="KEGG" id="sce:YER037W"/>
<dbReference type="AGR" id="SGD:S000000839"/>
<dbReference type="SGD" id="S000000839">
    <property type="gene designation" value="PHM8"/>
</dbReference>
<dbReference type="VEuPathDB" id="FungiDB:YER037W"/>
<dbReference type="eggNOG" id="KOG3109">
    <property type="taxonomic scope" value="Eukaryota"/>
</dbReference>
<dbReference type="GeneTree" id="ENSGT00940000176629"/>
<dbReference type="HOGENOM" id="CLU_059493_0_1_1"/>
<dbReference type="InParanoid" id="P40025"/>
<dbReference type="OMA" id="WEANEKS"/>
<dbReference type="OrthoDB" id="1065058at2759"/>
<dbReference type="BioCyc" id="MetaCyc:G3O-30218-MONOMER"/>
<dbReference type="BioCyc" id="YEAST:G3O-30218-MONOMER"/>
<dbReference type="BRENDA" id="3.1.3.5">
    <property type="organism ID" value="984"/>
</dbReference>
<dbReference type="BioGRID-ORCS" id="856759">
    <property type="hits" value="0 hits in 10 CRISPR screens"/>
</dbReference>
<dbReference type="PRO" id="PR:P40025"/>
<dbReference type="Proteomes" id="UP000002311">
    <property type="component" value="Chromosome V"/>
</dbReference>
<dbReference type="RNAct" id="P40025">
    <property type="molecule type" value="protein"/>
</dbReference>
<dbReference type="GO" id="GO:0005737">
    <property type="term" value="C:cytoplasm"/>
    <property type="evidence" value="ECO:0007005"/>
    <property type="project" value="SGD"/>
</dbReference>
<dbReference type="GO" id="GO:0005634">
    <property type="term" value="C:nucleus"/>
    <property type="evidence" value="ECO:0007005"/>
    <property type="project" value="SGD"/>
</dbReference>
<dbReference type="GO" id="GO:0052642">
    <property type="term" value="F:lysophosphatidic acid phosphatase activity"/>
    <property type="evidence" value="ECO:0000314"/>
    <property type="project" value="SGD"/>
</dbReference>
<dbReference type="GO" id="GO:0008252">
    <property type="term" value="F:nucleotidase activity"/>
    <property type="evidence" value="ECO:0000314"/>
    <property type="project" value="SGD"/>
</dbReference>
<dbReference type="GO" id="GO:0016036">
    <property type="term" value="P:cellular response to phosphate starvation"/>
    <property type="evidence" value="ECO:0000315"/>
    <property type="project" value="SGD"/>
</dbReference>
<dbReference type="GO" id="GO:0009166">
    <property type="term" value="P:nucleotide catabolic process"/>
    <property type="evidence" value="ECO:0000315"/>
    <property type="project" value="SGD"/>
</dbReference>
<dbReference type="GO" id="GO:0006206">
    <property type="term" value="P:pyrimidine nucleobase metabolic process"/>
    <property type="evidence" value="ECO:0000318"/>
    <property type="project" value="GO_Central"/>
</dbReference>
<dbReference type="GO" id="GO:0090549">
    <property type="term" value="P:response to carbon starvation"/>
    <property type="evidence" value="ECO:0000315"/>
    <property type="project" value="SGD"/>
</dbReference>
<dbReference type="GO" id="GO:0070328">
    <property type="term" value="P:triglyceride homeostasis"/>
    <property type="evidence" value="ECO:0000315"/>
    <property type="project" value="SGD"/>
</dbReference>
<dbReference type="CDD" id="cd02604">
    <property type="entry name" value="HAD_5NT"/>
    <property type="match status" value="1"/>
</dbReference>
<dbReference type="Gene3D" id="1.10.150.450">
    <property type="match status" value="1"/>
</dbReference>
<dbReference type="Gene3D" id="3.40.50.1000">
    <property type="entry name" value="HAD superfamily/HAD-like"/>
    <property type="match status" value="1"/>
</dbReference>
<dbReference type="InterPro" id="IPR036412">
    <property type="entry name" value="HAD-like_sf"/>
</dbReference>
<dbReference type="InterPro" id="IPR006439">
    <property type="entry name" value="HAD-SF_hydro_IA"/>
</dbReference>
<dbReference type="InterPro" id="IPR023214">
    <property type="entry name" value="HAD_sf"/>
</dbReference>
<dbReference type="InterPro" id="IPR010237">
    <property type="entry name" value="Pyr-5-nucltdase"/>
</dbReference>
<dbReference type="InterPro" id="IPR052791">
    <property type="entry name" value="SSM1_domain"/>
</dbReference>
<dbReference type="NCBIfam" id="TIGR01509">
    <property type="entry name" value="HAD-SF-IA-v3"/>
    <property type="match status" value="1"/>
</dbReference>
<dbReference type="NCBIfam" id="TIGR01993">
    <property type="entry name" value="Pyr-5-nucltdase"/>
    <property type="match status" value="1"/>
</dbReference>
<dbReference type="PANTHER" id="PTHR47438">
    <property type="entry name" value="PHOSPHATE METABOLISM PROTEIN 8-RELATED"/>
    <property type="match status" value="1"/>
</dbReference>
<dbReference type="PANTHER" id="PTHR47438:SF1">
    <property type="entry name" value="PHOSPHATE METABOLISM PROTEIN 8-RELATED"/>
    <property type="match status" value="1"/>
</dbReference>
<dbReference type="Pfam" id="PF00702">
    <property type="entry name" value="Hydrolase"/>
    <property type="match status" value="1"/>
</dbReference>
<dbReference type="SFLD" id="SFLDG01132">
    <property type="entry name" value="C1.5.3:_5'-Nucleotidase_Like"/>
    <property type="match status" value="1"/>
</dbReference>
<dbReference type="SFLD" id="SFLDG01129">
    <property type="entry name" value="C1.5:_HAD__Beta-PGM__Phosphata"/>
    <property type="match status" value="1"/>
</dbReference>
<dbReference type="SUPFAM" id="SSF56784">
    <property type="entry name" value="HAD-like"/>
    <property type="match status" value="1"/>
</dbReference>
<reference key="1">
    <citation type="journal article" date="1997" name="Nature">
        <title>The nucleotide sequence of Saccharomyces cerevisiae chromosome V.</title>
        <authorList>
            <person name="Dietrich F.S."/>
            <person name="Mulligan J.T."/>
            <person name="Hennessy K.M."/>
            <person name="Yelton M.A."/>
            <person name="Allen E."/>
            <person name="Araujo R."/>
            <person name="Aviles E."/>
            <person name="Berno A."/>
            <person name="Brennan T."/>
            <person name="Carpenter J."/>
            <person name="Chen E."/>
            <person name="Cherry J.M."/>
            <person name="Chung E."/>
            <person name="Duncan M."/>
            <person name="Guzman E."/>
            <person name="Hartzell G."/>
            <person name="Hunicke-Smith S."/>
            <person name="Hyman R.W."/>
            <person name="Kayser A."/>
            <person name="Komp C."/>
            <person name="Lashkari D."/>
            <person name="Lew H."/>
            <person name="Lin D."/>
            <person name="Mosedale D."/>
            <person name="Nakahara K."/>
            <person name="Namath A."/>
            <person name="Norgren R."/>
            <person name="Oefner P."/>
            <person name="Oh C."/>
            <person name="Petel F.X."/>
            <person name="Roberts D."/>
            <person name="Sehl P."/>
            <person name="Schramm S."/>
            <person name="Shogren T."/>
            <person name="Smith V."/>
            <person name="Taylor P."/>
            <person name="Wei Y."/>
            <person name="Botstein D."/>
            <person name="Davis R.W."/>
        </authorList>
    </citation>
    <scope>NUCLEOTIDE SEQUENCE [LARGE SCALE GENOMIC DNA]</scope>
    <source>
        <strain>ATCC 204508 / S288c</strain>
    </source>
</reference>
<reference key="2">
    <citation type="journal article" date="2014" name="G3 (Bethesda)">
        <title>The reference genome sequence of Saccharomyces cerevisiae: Then and now.</title>
        <authorList>
            <person name="Engel S.R."/>
            <person name="Dietrich F.S."/>
            <person name="Fisk D.G."/>
            <person name="Binkley G."/>
            <person name="Balakrishnan R."/>
            <person name="Costanzo M.C."/>
            <person name="Dwight S.S."/>
            <person name="Hitz B.C."/>
            <person name="Karra K."/>
            <person name="Nash R.S."/>
            <person name="Weng S."/>
            <person name="Wong E.D."/>
            <person name="Lloyd P."/>
            <person name="Skrzypek M.S."/>
            <person name="Miyasato S.R."/>
            <person name="Simison M."/>
            <person name="Cherry J.M."/>
        </authorList>
    </citation>
    <scope>GENOME REANNOTATION</scope>
    <source>
        <strain>ATCC 204508 / S288c</strain>
    </source>
</reference>
<reference key="3">
    <citation type="journal article" date="2000" name="Mol. Biol. Cell">
        <title>New components of a system for phosphate accumulation and polyphosphate metabolism in Saccharomyces cerevisiae revealed by genomic expression analysis.</title>
        <authorList>
            <person name="Ogawa N."/>
            <person name="DeRisi J.L."/>
            <person name="Brown P.O."/>
        </authorList>
    </citation>
    <scope>PRELIMINARY FUNCTION</scope>
    <scope>INDUCTION</scope>
</reference>
<reference key="4">
    <citation type="journal article" date="2003" name="Nature">
        <title>Global analysis of protein expression in yeast.</title>
        <authorList>
            <person name="Ghaemmaghami S."/>
            <person name="Huh W.-K."/>
            <person name="Bower K."/>
            <person name="Howson R.W."/>
            <person name="Belle A."/>
            <person name="Dephoure N."/>
            <person name="O'Shea E.K."/>
            <person name="Weissman J.S."/>
        </authorList>
    </citation>
    <scope>LEVEL OF PROTEIN EXPRESSION [LARGE SCALE ANALYSIS]</scope>
</reference>
<gene>
    <name type="primary">PHM8</name>
    <name type="ordered locus">YER037W</name>
</gene>